<proteinExistence type="inferred from homology"/>
<protein>
    <recommendedName>
        <fullName evidence="1">Large ribosomal subunit protein bL19</fullName>
    </recommendedName>
    <alternativeName>
        <fullName evidence="2">50S ribosomal protein L19</fullName>
    </alternativeName>
</protein>
<sequence>MNRLDFVDQASLRDDIPVFGPGDTVNVHVKVIEGAKERIQVFKGVVIRRQGGGVRETFTVRKESYGVGVERTFPVHSPNIDHIQVVTRGDVRRAKLYYLRELRGKKAKIKEKR</sequence>
<accession>A0QJ43</accession>
<reference key="1">
    <citation type="submission" date="2006-10" db="EMBL/GenBank/DDBJ databases">
        <authorList>
            <person name="Fleischmann R.D."/>
            <person name="Dodson R.J."/>
            <person name="Haft D.H."/>
            <person name="Merkel J.S."/>
            <person name="Nelson W.C."/>
            <person name="Fraser C.M."/>
        </authorList>
    </citation>
    <scope>NUCLEOTIDE SEQUENCE [LARGE SCALE GENOMIC DNA]</scope>
    <source>
        <strain>104</strain>
    </source>
</reference>
<comment type="function">
    <text evidence="1">This protein is located at the 30S-50S ribosomal subunit interface and may play a role in the structure and function of the aminoacyl-tRNA binding site.</text>
</comment>
<comment type="similarity">
    <text evidence="1">Belongs to the bacterial ribosomal protein bL19 family.</text>
</comment>
<dbReference type="EMBL" id="CP000479">
    <property type="protein sequence ID" value="ABK67783.1"/>
    <property type="molecule type" value="Genomic_DNA"/>
</dbReference>
<dbReference type="RefSeq" id="WP_003875074.1">
    <property type="nucleotide sequence ID" value="NC_008595.1"/>
</dbReference>
<dbReference type="SMR" id="A0QJ43"/>
<dbReference type="GeneID" id="75271152"/>
<dbReference type="KEGG" id="mav:MAV_3759"/>
<dbReference type="HOGENOM" id="CLU_103507_2_1_11"/>
<dbReference type="Proteomes" id="UP000001574">
    <property type="component" value="Chromosome"/>
</dbReference>
<dbReference type="GO" id="GO:0022625">
    <property type="term" value="C:cytosolic large ribosomal subunit"/>
    <property type="evidence" value="ECO:0007669"/>
    <property type="project" value="TreeGrafter"/>
</dbReference>
<dbReference type="GO" id="GO:0003735">
    <property type="term" value="F:structural constituent of ribosome"/>
    <property type="evidence" value="ECO:0007669"/>
    <property type="project" value="InterPro"/>
</dbReference>
<dbReference type="GO" id="GO:0006412">
    <property type="term" value="P:translation"/>
    <property type="evidence" value="ECO:0007669"/>
    <property type="project" value="UniProtKB-UniRule"/>
</dbReference>
<dbReference type="FunFam" id="2.30.30.790:FF:000001">
    <property type="entry name" value="50S ribosomal protein L19"/>
    <property type="match status" value="1"/>
</dbReference>
<dbReference type="Gene3D" id="2.30.30.790">
    <property type="match status" value="1"/>
</dbReference>
<dbReference type="HAMAP" id="MF_00402">
    <property type="entry name" value="Ribosomal_bL19"/>
    <property type="match status" value="1"/>
</dbReference>
<dbReference type="InterPro" id="IPR001857">
    <property type="entry name" value="Ribosomal_bL19"/>
</dbReference>
<dbReference type="InterPro" id="IPR018257">
    <property type="entry name" value="Ribosomal_bL19_CS"/>
</dbReference>
<dbReference type="InterPro" id="IPR038657">
    <property type="entry name" value="Ribosomal_bL19_sf"/>
</dbReference>
<dbReference type="InterPro" id="IPR008991">
    <property type="entry name" value="Translation_prot_SH3-like_sf"/>
</dbReference>
<dbReference type="NCBIfam" id="TIGR01024">
    <property type="entry name" value="rplS_bact"/>
    <property type="match status" value="1"/>
</dbReference>
<dbReference type="PANTHER" id="PTHR15680:SF9">
    <property type="entry name" value="LARGE RIBOSOMAL SUBUNIT PROTEIN BL19M"/>
    <property type="match status" value="1"/>
</dbReference>
<dbReference type="PANTHER" id="PTHR15680">
    <property type="entry name" value="RIBOSOMAL PROTEIN L19"/>
    <property type="match status" value="1"/>
</dbReference>
<dbReference type="Pfam" id="PF01245">
    <property type="entry name" value="Ribosomal_L19"/>
    <property type="match status" value="1"/>
</dbReference>
<dbReference type="PIRSF" id="PIRSF002191">
    <property type="entry name" value="Ribosomal_L19"/>
    <property type="match status" value="1"/>
</dbReference>
<dbReference type="PRINTS" id="PR00061">
    <property type="entry name" value="RIBOSOMALL19"/>
</dbReference>
<dbReference type="SUPFAM" id="SSF50104">
    <property type="entry name" value="Translation proteins SH3-like domain"/>
    <property type="match status" value="1"/>
</dbReference>
<dbReference type="PROSITE" id="PS01015">
    <property type="entry name" value="RIBOSOMAL_L19"/>
    <property type="match status" value="1"/>
</dbReference>
<keyword id="KW-0687">Ribonucleoprotein</keyword>
<keyword id="KW-0689">Ribosomal protein</keyword>
<name>RL19_MYCA1</name>
<gene>
    <name evidence="1" type="primary">rplS</name>
    <name type="ordered locus">MAV_3759</name>
</gene>
<feature type="chain" id="PRO_1000049698" description="Large ribosomal subunit protein bL19">
    <location>
        <begin position="1"/>
        <end position="113"/>
    </location>
</feature>
<organism>
    <name type="scientific">Mycobacterium avium (strain 104)</name>
    <dbReference type="NCBI Taxonomy" id="243243"/>
    <lineage>
        <taxon>Bacteria</taxon>
        <taxon>Bacillati</taxon>
        <taxon>Actinomycetota</taxon>
        <taxon>Actinomycetes</taxon>
        <taxon>Mycobacteriales</taxon>
        <taxon>Mycobacteriaceae</taxon>
        <taxon>Mycobacterium</taxon>
        <taxon>Mycobacterium avium complex (MAC)</taxon>
    </lineage>
</organism>
<evidence type="ECO:0000255" key="1">
    <source>
        <dbReference type="HAMAP-Rule" id="MF_00402"/>
    </source>
</evidence>
<evidence type="ECO:0000305" key="2"/>